<feature type="chain" id="PRO_0000135111" description="Probable 1-Cys peroxiredoxin">
    <location>
        <begin position="1"/>
        <end position="218"/>
    </location>
</feature>
<feature type="domain" description="Thioredoxin" evidence="4">
    <location>
        <begin position="5"/>
        <end position="166"/>
    </location>
</feature>
<feature type="active site" description="Cysteine sulfenic acid (-SOH) intermediate" evidence="3">
    <location>
        <position position="47"/>
    </location>
</feature>
<dbReference type="EC" id="1.11.1.24" evidence="3"/>
<dbReference type="EMBL" id="U40818">
    <property type="protein sequence ID" value="AAA83758.1"/>
    <property type="molecule type" value="mRNA"/>
</dbReference>
<dbReference type="SMR" id="P52574"/>
<dbReference type="PeroxiBase" id="4418">
    <property type="entry name" value="Tru1CysPrx"/>
</dbReference>
<dbReference type="GO" id="GO:0005829">
    <property type="term" value="C:cytosol"/>
    <property type="evidence" value="ECO:0007669"/>
    <property type="project" value="TreeGrafter"/>
</dbReference>
<dbReference type="GO" id="GO:0005739">
    <property type="term" value="C:mitochondrion"/>
    <property type="evidence" value="ECO:0007669"/>
    <property type="project" value="TreeGrafter"/>
</dbReference>
<dbReference type="GO" id="GO:0005634">
    <property type="term" value="C:nucleus"/>
    <property type="evidence" value="ECO:0007669"/>
    <property type="project" value="UniProtKB-SubCell"/>
</dbReference>
<dbReference type="GO" id="GO:0140824">
    <property type="term" value="F:thioredoxin-dependent peroxiredoxin activity"/>
    <property type="evidence" value="ECO:0007669"/>
    <property type="project" value="UniProtKB-EC"/>
</dbReference>
<dbReference type="GO" id="GO:0045454">
    <property type="term" value="P:cell redox homeostasis"/>
    <property type="evidence" value="ECO:0007669"/>
    <property type="project" value="TreeGrafter"/>
</dbReference>
<dbReference type="CDD" id="cd03016">
    <property type="entry name" value="PRX_1cys"/>
    <property type="match status" value="1"/>
</dbReference>
<dbReference type="FunFam" id="3.30.1020.10:FF:000001">
    <property type="entry name" value="1-Cys peroxiredoxin"/>
    <property type="match status" value="1"/>
</dbReference>
<dbReference type="FunFam" id="3.40.30.10:FF:000011">
    <property type="entry name" value="Peroxiredoxin PRX1"/>
    <property type="match status" value="1"/>
</dbReference>
<dbReference type="Gene3D" id="3.30.1020.10">
    <property type="entry name" value="Antioxidant, Horf6, Chain A, domain2"/>
    <property type="match status" value="1"/>
</dbReference>
<dbReference type="Gene3D" id="3.40.30.10">
    <property type="entry name" value="Glutaredoxin"/>
    <property type="match status" value="1"/>
</dbReference>
<dbReference type="InterPro" id="IPR000866">
    <property type="entry name" value="AhpC/TSA"/>
</dbReference>
<dbReference type="InterPro" id="IPR024706">
    <property type="entry name" value="Peroxiredoxin_AhpC-typ"/>
</dbReference>
<dbReference type="InterPro" id="IPR019479">
    <property type="entry name" value="Peroxiredoxin_C"/>
</dbReference>
<dbReference type="InterPro" id="IPR045020">
    <property type="entry name" value="PRX_1cys"/>
</dbReference>
<dbReference type="InterPro" id="IPR036249">
    <property type="entry name" value="Thioredoxin-like_sf"/>
</dbReference>
<dbReference type="InterPro" id="IPR013766">
    <property type="entry name" value="Thioredoxin_domain"/>
</dbReference>
<dbReference type="PANTHER" id="PTHR43503">
    <property type="entry name" value="MCG48959-RELATED"/>
    <property type="match status" value="1"/>
</dbReference>
<dbReference type="PANTHER" id="PTHR43503:SF4">
    <property type="entry name" value="PEROXIREDOXIN-6"/>
    <property type="match status" value="1"/>
</dbReference>
<dbReference type="Pfam" id="PF10417">
    <property type="entry name" value="1-cysPrx_C"/>
    <property type="match status" value="1"/>
</dbReference>
<dbReference type="Pfam" id="PF00578">
    <property type="entry name" value="AhpC-TSA"/>
    <property type="match status" value="1"/>
</dbReference>
<dbReference type="PIRSF" id="PIRSF000239">
    <property type="entry name" value="AHPC"/>
    <property type="match status" value="1"/>
</dbReference>
<dbReference type="SUPFAM" id="SSF52833">
    <property type="entry name" value="Thioredoxin-like"/>
    <property type="match status" value="1"/>
</dbReference>
<dbReference type="PROSITE" id="PS51352">
    <property type="entry name" value="THIOREDOXIN_2"/>
    <property type="match status" value="1"/>
</dbReference>
<name>REHY_SYNRU</name>
<comment type="function">
    <text evidence="3 5">Thiol-specific peroxidase that catalyzes the reduction of hydrogen peroxide and organic hydroperoxides to water and alcohols, respectively. Seems to contribute to the inhibition of germination during stress (By similarity). Associated with the rehydration events involved in the recovery of the desiccation-tolerant moss (Ref.1).</text>
</comment>
<comment type="catalytic activity">
    <reaction evidence="3">
        <text>a hydroperoxide + [thioredoxin]-dithiol = an alcohol + [thioredoxin]-disulfide + H2O</text>
        <dbReference type="Rhea" id="RHEA:62620"/>
        <dbReference type="Rhea" id="RHEA-COMP:10698"/>
        <dbReference type="Rhea" id="RHEA-COMP:10700"/>
        <dbReference type="ChEBI" id="CHEBI:15377"/>
        <dbReference type="ChEBI" id="CHEBI:29950"/>
        <dbReference type="ChEBI" id="CHEBI:30879"/>
        <dbReference type="ChEBI" id="CHEBI:35924"/>
        <dbReference type="ChEBI" id="CHEBI:50058"/>
        <dbReference type="EC" id="1.11.1.24"/>
    </reaction>
</comment>
<comment type="subcellular location">
    <subcellularLocation>
        <location evidence="1">Nucleus</location>
    </subcellularLocation>
    <subcellularLocation>
        <location evidence="1">Cytoplasm</location>
    </subcellularLocation>
</comment>
<comment type="miscellaneous">
    <text evidence="2">The active site is a conserved redox-active cysteine residue, the peroxidatic cysteine (C(P)), which makes the nucleophilic attack on the peroxide substrate. The peroxide oxidizes the C(P)-SH to cysteine sulfenic acid (C(P)-SOH), which then reacts with another cysteine residue, the resolving cysteine (C(R)), to form a disulfide bridge. The disulfide is subsequently reduced by an appropriate electron donor to complete the catalytic cycle. In this 1-Cys peroxiredoxin, no C(R) is present and C(P) instead forms a disulfide with a cysteine from another protein or with a small thiol molecule.</text>
</comment>
<comment type="similarity">
    <text evidence="6">Belongs to the peroxiredoxin family. Prx6 subfamily.</text>
</comment>
<evidence type="ECO:0000250" key="1">
    <source>
        <dbReference type="UniProtKB" id="O04005"/>
    </source>
</evidence>
<evidence type="ECO:0000250" key="2">
    <source>
        <dbReference type="UniProtKB" id="O35244"/>
    </source>
</evidence>
<evidence type="ECO:0000250" key="3">
    <source>
        <dbReference type="UniProtKB" id="P30041"/>
    </source>
</evidence>
<evidence type="ECO:0000255" key="4">
    <source>
        <dbReference type="PROSITE-ProRule" id="PRU00691"/>
    </source>
</evidence>
<evidence type="ECO:0000269" key="5">
    <source ref="1"/>
</evidence>
<evidence type="ECO:0000305" key="6"/>
<proteinExistence type="evidence at transcript level"/>
<organism>
    <name type="scientific">Syntrichia ruralis</name>
    <name type="common">Great hairy screw-moss</name>
    <name type="synonym">Tortula ruralis</name>
    <dbReference type="NCBI Taxonomy" id="38588"/>
    <lineage>
        <taxon>Eukaryota</taxon>
        <taxon>Viridiplantae</taxon>
        <taxon>Streptophyta</taxon>
        <taxon>Embryophyta</taxon>
        <taxon>Bryophyta</taxon>
        <taxon>Bryophytina</taxon>
        <taxon>Bryopsida</taxon>
        <taxon>Dicranidae</taxon>
        <taxon>Pottiales</taxon>
        <taxon>Pottiaceae</taxon>
        <taxon>Syntrichia</taxon>
    </lineage>
</organism>
<protein>
    <recommendedName>
        <fullName>Probable 1-Cys peroxiredoxin</fullName>
        <ecNumber evidence="3">1.11.1.24</ecNumber>
    </recommendedName>
    <alternativeName>
        <fullName>Rehydrin</fullName>
    </alternativeName>
    <alternativeName>
        <fullName>Thioredoxin peroxidase</fullName>
    </alternativeName>
    <alternativeName>
        <fullName evidence="6">Thioredoxin-dependent peroxiredoxin</fullName>
    </alternativeName>
</protein>
<sequence>MGGGWALGDLVPDIQADSTMGHIKVRDYCKDGWTIIFSHPGDYPPVCTTELGKIAAYNPEFEKRGVKLLGLSTDTVEDHQGWIKDIESYTPDAPVLYPILADPDRKITVALNMMDPDEKDANGKPLASRALHIIGPDCRLKLSLLYPGTTGRNFDEVLRVLDSLQLASKHKIATPANWQKGEPVVISPSVSDEKAKQMFPQGWETVNLPKALRMTFVD</sequence>
<accession>P52574</accession>
<reference key="1">
    <citation type="journal article" date="1994" name="J. Exp. Bot.">
        <title>Desiccation-tolerance and gene expression: analysis of a recovery clone, Tr288, and its implications in mRNA storage during drying.</title>
        <authorList>
            <person name="Oliver M.J."/>
            <person name="Scott H.B. II"/>
        </authorList>
    </citation>
    <scope>NUCLEOTIDE SEQUENCE [MRNA]</scope>
    <source>
        <tissue>Leaf</tissue>
    </source>
</reference>
<keyword id="KW-0049">Antioxidant</keyword>
<keyword id="KW-0963">Cytoplasm</keyword>
<keyword id="KW-0539">Nucleus</keyword>
<keyword id="KW-0560">Oxidoreductase</keyword>
<keyword id="KW-0575">Peroxidase</keyword>
<keyword id="KW-0676">Redox-active center</keyword>